<organism>
    <name type="scientific">Salmonella heidelberg (strain SL476)</name>
    <dbReference type="NCBI Taxonomy" id="454169"/>
    <lineage>
        <taxon>Bacteria</taxon>
        <taxon>Pseudomonadati</taxon>
        <taxon>Pseudomonadota</taxon>
        <taxon>Gammaproteobacteria</taxon>
        <taxon>Enterobacterales</taxon>
        <taxon>Enterobacteriaceae</taxon>
        <taxon>Salmonella</taxon>
    </lineage>
</organism>
<evidence type="ECO:0000255" key="1">
    <source>
        <dbReference type="HAMAP-Rule" id="MF_01660"/>
    </source>
</evidence>
<reference key="1">
    <citation type="journal article" date="2011" name="J. Bacteriol.">
        <title>Comparative genomics of 28 Salmonella enterica isolates: evidence for CRISPR-mediated adaptive sublineage evolution.</title>
        <authorList>
            <person name="Fricke W.F."/>
            <person name="Mammel M.K."/>
            <person name="McDermott P.F."/>
            <person name="Tartera C."/>
            <person name="White D.G."/>
            <person name="Leclerc J.E."/>
            <person name="Ravel J."/>
            <person name="Cebula T.A."/>
        </authorList>
    </citation>
    <scope>NUCLEOTIDE SEQUENCE [LARGE SCALE GENOMIC DNA]</scope>
    <source>
        <strain>SL476</strain>
    </source>
</reference>
<sequence>MMLHAQHMPGQPGAPSLVFLHGFSGDCREWQPVGEQFHGCSRLYIDLPGHGGSTAIPVGGFADVIRLLRATLISYNILKFWLVGYSLGGRVAMMAACQGIPGLCGLVVEGGHPGLQNEQARAERRLSDGRWAERFRREPLTEVFHDWYQQPVFASLTAQQRQTLTALRSQNNGETLAAMLEATSLAAQPDLREALNALAFPFYYLCGERDSKFRALAQEVAATCHVIRNAGHNAHRENPAGVVDSLAQILRL</sequence>
<protein>
    <recommendedName>
        <fullName evidence="1">2-succinyl-6-hydroxy-2,4-cyclohexadiene-1-carboxylate synthase</fullName>
        <shortName evidence="1">SHCHC synthase</shortName>
        <ecNumber evidence="1">4.2.99.20</ecNumber>
    </recommendedName>
</protein>
<comment type="function">
    <text evidence="1">Catalyzes a proton abstraction reaction that results in 2,5-elimination of pyruvate from 2-succinyl-5-enolpyruvyl-6-hydroxy-3-cyclohexene-1-carboxylate (SEPHCHC) and the formation of 2-succinyl-6-hydroxy-2,4-cyclohexadiene-1-carboxylate (SHCHC).</text>
</comment>
<comment type="catalytic activity">
    <reaction evidence="1">
        <text>5-enolpyruvoyl-6-hydroxy-2-succinyl-cyclohex-3-ene-1-carboxylate = (1R,6R)-6-hydroxy-2-succinyl-cyclohexa-2,4-diene-1-carboxylate + pyruvate</text>
        <dbReference type="Rhea" id="RHEA:25597"/>
        <dbReference type="ChEBI" id="CHEBI:15361"/>
        <dbReference type="ChEBI" id="CHEBI:58689"/>
        <dbReference type="ChEBI" id="CHEBI:58818"/>
        <dbReference type="EC" id="4.2.99.20"/>
    </reaction>
</comment>
<comment type="pathway">
    <text evidence="1">Quinol/quinone metabolism; 1,4-dihydroxy-2-naphthoate biosynthesis; 1,4-dihydroxy-2-naphthoate from chorismate: step 3/7.</text>
</comment>
<comment type="pathway">
    <text evidence="1">Quinol/quinone metabolism; menaquinone biosynthesis.</text>
</comment>
<comment type="subunit">
    <text evidence="1">Monomer.</text>
</comment>
<comment type="similarity">
    <text evidence="1">Belongs to the AB hydrolase superfamily. MenH family.</text>
</comment>
<dbReference type="EC" id="4.2.99.20" evidence="1"/>
<dbReference type="EMBL" id="CP001120">
    <property type="protein sequence ID" value="ACF68208.1"/>
    <property type="molecule type" value="Genomic_DNA"/>
</dbReference>
<dbReference type="RefSeq" id="WP_000979144.1">
    <property type="nucleotide sequence ID" value="NC_011083.1"/>
</dbReference>
<dbReference type="SMR" id="B4TBH5"/>
<dbReference type="ESTHER" id="salty-YFBB">
    <property type="family name" value="MenH_SHCHC"/>
</dbReference>
<dbReference type="KEGG" id="seh:SeHA_C2548"/>
<dbReference type="HOGENOM" id="CLU_020336_38_2_6"/>
<dbReference type="UniPathway" id="UPA00079"/>
<dbReference type="UniPathway" id="UPA01057">
    <property type="reaction ID" value="UER00900"/>
</dbReference>
<dbReference type="Proteomes" id="UP000001866">
    <property type="component" value="Chromosome"/>
</dbReference>
<dbReference type="GO" id="GO:0070205">
    <property type="term" value="F:2-succinyl-6-hydroxy-2,4-cyclohexadiene-1-carboxylate synthase activity"/>
    <property type="evidence" value="ECO:0007669"/>
    <property type="project" value="UniProtKB-UniRule"/>
</dbReference>
<dbReference type="GO" id="GO:0009234">
    <property type="term" value="P:menaquinone biosynthetic process"/>
    <property type="evidence" value="ECO:0007669"/>
    <property type="project" value="UniProtKB-UniRule"/>
</dbReference>
<dbReference type="Gene3D" id="3.40.50.1820">
    <property type="entry name" value="alpha/beta hydrolase"/>
    <property type="match status" value="1"/>
</dbReference>
<dbReference type="HAMAP" id="MF_01660">
    <property type="entry name" value="MenH"/>
    <property type="match status" value="1"/>
</dbReference>
<dbReference type="InterPro" id="IPR000073">
    <property type="entry name" value="AB_hydrolase_1"/>
</dbReference>
<dbReference type="InterPro" id="IPR029058">
    <property type="entry name" value="AB_hydrolase_fold"/>
</dbReference>
<dbReference type="InterPro" id="IPR022485">
    <property type="entry name" value="SHCHC_synthase_MenH"/>
</dbReference>
<dbReference type="NCBIfam" id="TIGR03695">
    <property type="entry name" value="menH_SHCHC"/>
    <property type="match status" value="1"/>
</dbReference>
<dbReference type="NCBIfam" id="NF008340">
    <property type="entry name" value="PRK11126.1"/>
    <property type="match status" value="1"/>
</dbReference>
<dbReference type="PANTHER" id="PTHR42916">
    <property type="entry name" value="2-SUCCINYL-5-ENOLPYRUVYL-6-HYDROXY-3-CYCLOHEXENE-1-CARBOXYLATE SYNTHASE"/>
    <property type="match status" value="1"/>
</dbReference>
<dbReference type="PANTHER" id="PTHR42916:SF1">
    <property type="entry name" value="PROTEIN PHYLLO, CHLOROPLASTIC"/>
    <property type="match status" value="1"/>
</dbReference>
<dbReference type="Pfam" id="PF12697">
    <property type="entry name" value="Abhydrolase_6"/>
    <property type="match status" value="1"/>
</dbReference>
<dbReference type="SUPFAM" id="SSF53474">
    <property type="entry name" value="alpha/beta-Hydrolases"/>
    <property type="match status" value="1"/>
</dbReference>
<proteinExistence type="inferred from homology"/>
<gene>
    <name evidence="1" type="primary">menH</name>
    <name type="ordered locus">SeHA_C2548</name>
</gene>
<name>MENH_SALHS</name>
<accession>B4TBH5</accession>
<keyword id="KW-0456">Lyase</keyword>
<keyword id="KW-0474">Menaquinone biosynthesis</keyword>
<feature type="chain" id="PRO_1000187118" description="2-succinyl-6-hydroxy-2,4-cyclohexadiene-1-carboxylate synthase">
    <location>
        <begin position="1"/>
        <end position="252"/>
    </location>
</feature>